<reference key="1">
    <citation type="journal article" date="1996" name="Plant J.">
        <title>Molecular cloning and characterization of a cDNA encoding the gibberellin biosynthetic enzyme ent-kaurene synthase B from pumpkin (Cucurbita maxima L.).</title>
        <authorList>
            <person name="Yamaguchi S."/>
            <person name="Saito T."/>
            <person name="Abe H."/>
            <person name="Yamane H."/>
            <person name="Murofushi N."/>
            <person name="Kamiya Y."/>
        </authorList>
    </citation>
    <scope>NUCLEOTIDE SEQUENCE [MRNA]</scope>
    <source>
        <strain>cv. Riesenmelone gelb vernetzt</strain>
        <tissue>Immature seed</tissue>
    </source>
</reference>
<reference key="2">
    <citation type="journal article" date="1995" name="Plant Physiol.">
        <title>Purification and properties of ent-kaurene synthase B from immature seeds of pumpkin.</title>
        <authorList>
            <person name="Saito T."/>
            <person name="Abe H."/>
            <person name="Yamane H."/>
            <person name="Sakurai A."/>
            <person name="Murofushi N."/>
            <person name="Takio K."/>
            <person name="Takahashi N."/>
            <person name="Kamiya Y."/>
        </authorList>
    </citation>
    <scope>PROTEIN SEQUENCE OF 217-229; 370-389; 395-403; 434-448 AND 615-622</scope>
    <scope>CHARACTERIZATION</scope>
    <source>
        <strain>cv. Riesenmelone gelb vernetzt</strain>
        <tissue>Endosperm</tissue>
    </source>
</reference>
<accession>Q39548</accession>
<evidence type="ECO:0000250" key="1"/>
<evidence type="ECO:0000255" key="2"/>
<evidence type="ECO:0000305" key="3"/>
<keyword id="KW-0150">Chloroplast</keyword>
<keyword id="KW-0903">Direct protein sequencing</keyword>
<keyword id="KW-0456">Lyase</keyword>
<keyword id="KW-0460">Magnesium</keyword>
<keyword id="KW-0479">Metal-binding</keyword>
<keyword id="KW-0934">Plastid</keyword>
<keyword id="KW-1185">Reference proteome</keyword>
<keyword id="KW-0809">Transit peptide</keyword>
<proteinExistence type="evidence at protein level"/>
<protein>
    <recommendedName>
        <fullName>Ent-kaur-16-ene synthase, chloroplastic</fullName>
        <ecNumber>4.2.3.19</ecNumber>
    </recommendedName>
    <alternativeName>
        <fullName>Ent-kaurene synthase</fullName>
    </alternativeName>
    <alternativeName>
        <fullName>Ent-kaurene synthase B</fullName>
        <shortName>KSB</shortName>
    </alternativeName>
</protein>
<sequence length="789" mass="89362">MYLSRPTGVARFAASSSSSSSASLFPGVDVDTTTKTGALHFEETKERIKKLFDKVELSVSAYDTAWVAMVPSPNSLNQPLFPECINWVLDSQHADGSWGLLHNDQLLMKANLLSTLACVLTLKRWNIGHDHMSKALDFIKSNIASATDENQRSPVGFDIIFPGMIEYAKDLNLNLPLAPTNVDALVRKKELELRSCRSNSEGGKAYLAYVSEGIGKLQDWDMVMQYQRKNGSLFNSPSTTAAAFMHRNDDGCFDYLRSLLQKFDGSVPTIYPLDIYARLHMVDSLQKFGIARHFKEEIRSVLDETYRCWMQGEENIFLDASTCAMAFRMLRVEGYDVSSDQLTQFSEDIFPNCLGGYLKDFGASLELYKASQIITHPDESVLENINSWTSRFLKHGLSSDSVWSDRTDSVVKQEAVNALEFPYNATLERLISKRAMESYSGDIVRISKSPYACLNFGHQDFLELAVEDFNTLQRIHLKELEELQRWVVENKLDELKFFRLHLGYCYFAAAATLTDPELHDARIAWAQNGVLTTVVDDFYDGGGSEEELDNLIELVEKWDPDGEVGYCSKDVEIVFLALHSTVCEIGRRALVWQGRSVMRNVIDGWLALLKVMRKEAEWSTNKVVPSMGEYMEQAHVSFALGPIILPMLFFVGPKLSEEMIGSCEYQKLYKLMSTAGRLKNDIRSYDRECKEGKLNILSLWMIDGGGNVTKEEAIEAIKGDFERAIRELLGLVLQENTTIPRACKDLFWKLMSIVNLFYMEDDGYTSNRLMNTVKAMFEQPMDLDALLNK</sequence>
<dbReference type="EC" id="4.2.3.19"/>
<dbReference type="EMBL" id="U43904">
    <property type="protein sequence ID" value="AAB39482.1"/>
    <property type="molecule type" value="mRNA"/>
</dbReference>
<dbReference type="PIR" id="T09672">
    <property type="entry name" value="T09672"/>
</dbReference>
<dbReference type="RefSeq" id="XP_022968895.1">
    <property type="nucleotide sequence ID" value="XM_023113127.1"/>
</dbReference>
<dbReference type="RefSeq" id="XP_022968896.1">
    <property type="nucleotide sequence ID" value="XM_023113128.1"/>
</dbReference>
<dbReference type="SMR" id="Q39548"/>
<dbReference type="GeneID" id="111468079"/>
<dbReference type="OrthoDB" id="2343925at2759"/>
<dbReference type="UniPathway" id="UPA00390"/>
<dbReference type="Proteomes" id="UP000504608">
    <property type="component" value="Unplaced"/>
</dbReference>
<dbReference type="GO" id="GO:0009507">
    <property type="term" value="C:chloroplast"/>
    <property type="evidence" value="ECO:0007669"/>
    <property type="project" value="UniProtKB-SubCell"/>
</dbReference>
<dbReference type="GO" id="GO:0009899">
    <property type="term" value="F:ent-kaurene synthase activity"/>
    <property type="evidence" value="ECO:0007669"/>
    <property type="project" value="UniProtKB-EC"/>
</dbReference>
<dbReference type="GO" id="GO:0000287">
    <property type="term" value="F:magnesium ion binding"/>
    <property type="evidence" value="ECO:0007669"/>
    <property type="project" value="InterPro"/>
</dbReference>
<dbReference type="GO" id="GO:0009686">
    <property type="term" value="P:gibberellin biosynthetic process"/>
    <property type="evidence" value="ECO:0007669"/>
    <property type="project" value="UniProtKB-UniPathway"/>
</dbReference>
<dbReference type="CDD" id="cd00684">
    <property type="entry name" value="Terpene_cyclase_plant_C1"/>
    <property type="match status" value="1"/>
</dbReference>
<dbReference type="FunFam" id="1.50.10.160:FF:000002">
    <property type="entry name" value="cis-abienol synthase, chloroplastic"/>
    <property type="match status" value="1"/>
</dbReference>
<dbReference type="FunFam" id="1.50.10.130:FF:000002">
    <property type="entry name" value="Ent-copalyl diphosphate synthase, chloroplastic"/>
    <property type="match status" value="1"/>
</dbReference>
<dbReference type="FunFam" id="1.10.600.10:FF:000005">
    <property type="entry name" value="Ent-kaur-16-ene synthase, chloroplastic"/>
    <property type="match status" value="1"/>
</dbReference>
<dbReference type="Gene3D" id="1.50.10.160">
    <property type="match status" value="1"/>
</dbReference>
<dbReference type="Gene3D" id="1.10.600.10">
    <property type="entry name" value="Farnesyl Diphosphate Synthase"/>
    <property type="match status" value="1"/>
</dbReference>
<dbReference type="Gene3D" id="1.50.10.130">
    <property type="entry name" value="Terpene synthase, N-terminal domain"/>
    <property type="match status" value="1"/>
</dbReference>
<dbReference type="InterPro" id="IPR008949">
    <property type="entry name" value="Isoprenoid_synthase_dom_sf"/>
</dbReference>
<dbReference type="InterPro" id="IPR044814">
    <property type="entry name" value="Terpene_cyclase_plant_C1"/>
</dbReference>
<dbReference type="InterPro" id="IPR001906">
    <property type="entry name" value="Terpene_synth_N"/>
</dbReference>
<dbReference type="InterPro" id="IPR036965">
    <property type="entry name" value="Terpene_synth_N_sf"/>
</dbReference>
<dbReference type="InterPro" id="IPR050148">
    <property type="entry name" value="Terpene_synthase-like"/>
</dbReference>
<dbReference type="InterPro" id="IPR005630">
    <property type="entry name" value="Terpene_synthase_metal-bd"/>
</dbReference>
<dbReference type="InterPro" id="IPR008930">
    <property type="entry name" value="Terpenoid_cyclase/PrenylTrfase"/>
</dbReference>
<dbReference type="PANTHER" id="PTHR31739">
    <property type="entry name" value="ENT-COPALYL DIPHOSPHATE SYNTHASE, CHLOROPLASTIC"/>
    <property type="match status" value="1"/>
</dbReference>
<dbReference type="PANTHER" id="PTHR31739:SF3">
    <property type="entry name" value="ENT-KAUR-16-ENE SYNTHASE, CHLOROPLASTIC"/>
    <property type="match status" value="1"/>
</dbReference>
<dbReference type="Pfam" id="PF01397">
    <property type="entry name" value="Terpene_synth"/>
    <property type="match status" value="1"/>
</dbReference>
<dbReference type="Pfam" id="PF03936">
    <property type="entry name" value="Terpene_synth_C"/>
    <property type="match status" value="1"/>
</dbReference>
<dbReference type="SFLD" id="SFLDG01014">
    <property type="entry name" value="Terpene_Cyclase_Like_1_N-term"/>
    <property type="match status" value="1"/>
</dbReference>
<dbReference type="SUPFAM" id="SSF48239">
    <property type="entry name" value="Terpenoid cyclases/Protein prenyltransferases"/>
    <property type="match status" value="2"/>
</dbReference>
<dbReference type="SUPFAM" id="SSF48576">
    <property type="entry name" value="Terpenoid synthases"/>
    <property type="match status" value="1"/>
</dbReference>
<organism>
    <name type="scientific">Cucurbita maxima</name>
    <name type="common">Pumpkin</name>
    <name type="synonym">Winter squash</name>
    <dbReference type="NCBI Taxonomy" id="3661"/>
    <lineage>
        <taxon>Eukaryota</taxon>
        <taxon>Viridiplantae</taxon>
        <taxon>Streptophyta</taxon>
        <taxon>Embryophyta</taxon>
        <taxon>Tracheophyta</taxon>
        <taxon>Spermatophyta</taxon>
        <taxon>Magnoliopsida</taxon>
        <taxon>eudicotyledons</taxon>
        <taxon>Gunneridae</taxon>
        <taxon>Pentapetalae</taxon>
        <taxon>rosids</taxon>
        <taxon>fabids</taxon>
        <taxon>Cucurbitales</taxon>
        <taxon>Cucurbitaceae</taxon>
        <taxon>Cucurbiteae</taxon>
        <taxon>Cucurbita</taxon>
    </lineage>
</organism>
<feature type="transit peptide" description="Chloroplast" evidence="2">
    <location>
        <begin position="1"/>
        <end status="unknown"/>
    </location>
</feature>
<feature type="chain" id="PRO_0000033626" description="Ent-kaur-16-ene synthase, chloroplastic">
    <location>
        <begin status="unknown"/>
        <end position="789"/>
    </location>
</feature>
<feature type="short sequence motif" description="DDXXD motif">
    <location>
        <begin position="536"/>
        <end position="540"/>
    </location>
</feature>
<feature type="binding site" evidence="1">
    <location>
        <position position="536"/>
    </location>
    <ligand>
        <name>Mg(2+)</name>
        <dbReference type="ChEBI" id="CHEBI:18420"/>
        <label>1</label>
    </ligand>
</feature>
<feature type="binding site" evidence="1">
    <location>
        <position position="536"/>
    </location>
    <ligand>
        <name>Mg(2+)</name>
        <dbReference type="ChEBI" id="CHEBI:18420"/>
        <label>2</label>
    </ligand>
</feature>
<feature type="binding site" evidence="1">
    <location>
        <position position="540"/>
    </location>
    <ligand>
        <name>Mg(2+)</name>
        <dbReference type="ChEBI" id="CHEBI:18420"/>
        <label>1</label>
    </ligand>
</feature>
<feature type="binding site" evidence="1">
    <location>
        <position position="540"/>
    </location>
    <ligand>
        <name>Mg(2+)</name>
        <dbReference type="ChEBI" id="CHEBI:18420"/>
        <label>2</label>
    </ligand>
</feature>
<feature type="binding site" evidence="1">
    <location>
        <position position="680"/>
    </location>
    <ligand>
        <name>Mg(2+)</name>
        <dbReference type="ChEBI" id="CHEBI:18420"/>
        <label>3</label>
    </ligand>
</feature>
<feature type="binding site" evidence="1">
    <location>
        <position position="684"/>
    </location>
    <ligand>
        <name>Mg(2+)</name>
        <dbReference type="ChEBI" id="CHEBI:18420"/>
        <label>3</label>
    </ligand>
</feature>
<feature type="binding site" evidence="1">
    <location>
        <position position="688"/>
    </location>
    <ligand>
        <name>Mg(2+)</name>
        <dbReference type="ChEBI" id="CHEBI:18420"/>
        <label>3</label>
    </ligand>
</feature>
<name>KSB_CUCMA</name>
<comment type="function">
    <text>Catalyzes the conversion of ent-copalyl diphosphate to the gibberellin precursor ent-kaur-16-ene.</text>
</comment>
<comment type="catalytic activity">
    <reaction>
        <text>ent-copalyl diphosphate = ent-kaur-16-ene + diphosphate</text>
        <dbReference type="Rhea" id="RHEA:22220"/>
        <dbReference type="ChEBI" id="CHEBI:15415"/>
        <dbReference type="ChEBI" id="CHEBI:33019"/>
        <dbReference type="ChEBI" id="CHEBI:58553"/>
        <dbReference type="EC" id="4.2.3.19"/>
    </reaction>
</comment>
<comment type="cofactor">
    <cofactor evidence="1">
        <name>Mg(2+)</name>
        <dbReference type="ChEBI" id="CHEBI:18420"/>
    </cofactor>
    <text evidence="1">Binds 3 Mg(2+) ions per subunit.</text>
</comment>
<comment type="biophysicochemical properties">
    <kinetics>
        <KM>0.35 uM for copalyl diphosphate</KM>
    </kinetics>
    <phDependence>
        <text>Optimum pH is 6.8-7.5.</text>
    </phDependence>
</comment>
<comment type="pathway">
    <text>Plant hormone biosynthesis; gibberellin biosynthesis.</text>
</comment>
<comment type="subcellular location">
    <subcellularLocation>
        <location>Plastid</location>
        <location>Chloroplast</location>
    </subcellularLocation>
</comment>
<comment type="tissue specificity">
    <text>Abundant in most tissues. Present in low amounts in mature cotyledons.</text>
</comment>
<comment type="domain">
    <text>The Asp-Asp-Xaa-Xaa-Asp/Glu (DDXXD/E) motif is important for the catalytic activity, presumably through binding to Mg(2+).</text>
</comment>
<comment type="PTM">
    <text>The N-terminus is blocked.</text>
</comment>
<comment type="similarity">
    <text evidence="3">Belongs to the terpene synthase family.</text>
</comment>